<keyword id="KW-0963">Cytoplasm</keyword>
<keyword id="KW-0648">Protein biosynthesis</keyword>
<organism>
    <name type="scientific">Bifidobacterium longum (strain DJO10A)</name>
    <dbReference type="NCBI Taxonomy" id="205913"/>
    <lineage>
        <taxon>Bacteria</taxon>
        <taxon>Bacillati</taxon>
        <taxon>Actinomycetota</taxon>
        <taxon>Actinomycetes</taxon>
        <taxon>Bifidobacteriales</taxon>
        <taxon>Bifidobacteriaceae</taxon>
        <taxon>Bifidobacterium</taxon>
    </lineage>
</organism>
<proteinExistence type="inferred from homology"/>
<accession>B3DRT4</accession>
<comment type="function">
    <text evidence="1">Responsible for the release of ribosomes from messenger RNA at the termination of protein biosynthesis. May increase the efficiency of translation by recycling ribosomes from one round of translation to another.</text>
</comment>
<comment type="subcellular location">
    <subcellularLocation>
        <location evidence="1">Cytoplasm</location>
    </subcellularLocation>
</comment>
<comment type="similarity">
    <text evidence="1">Belongs to the RRF family.</text>
</comment>
<reference key="1">
    <citation type="journal article" date="2008" name="BMC Genomics">
        <title>Comparative genomic analysis of the gut bacterium Bifidobacterium longum reveals loci susceptible to deletion during pure culture growth.</title>
        <authorList>
            <person name="Lee J.H."/>
            <person name="Karamychev V.N."/>
            <person name="Kozyavkin S.A."/>
            <person name="Mills D."/>
            <person name="Pavlov A.R."/>
            <person name="Pavlova N.V."/>
            <person name="Polouchine N.N."/>
            <person name="Richardson P.M."/>
            <person name="Shakhova V.V."/>
            <person name="Slesarev A.I."/>
            <person name="Weimer B."/>
            <person name="O'Sullivan D.J."/>
        </authorList>
    </citation>
    <scope>NUCLEOTIDE SEQUENCE [LARGE SCALE GENOMIC DNA]</scope>
    <source>
        <strain>DJO10A</strain>
    </source>
</reference>
<sequence>MSLIDQAKEQMAKTVENTKENFSGIRTGRANPALLNGITVDYYGAPTPIKAVASIGVPEPRTLSVTPFDASQAGAVEKALRNSDLGISPNRDGNVIRLTMPELTEDRRKEYVKLAKGKAEDGKVAVRNIRRKTKETIDKAVKDGEMGEDEGDRLLKDLDKVTKSVTDEIDTLLETKQKEIMEV</sequence>
<dbReference type="EMBL" id="CP000605">
    <property type="protein sequence ID" value="ACD97853.1"/>
    <property type="molecule type" value="Genomic_DNA"/>
</dbReference>
<dbReference type="RefSeq" id="WP_007052756.1">
    <property type="nucleotide sequence ID" value="NC_010816.1"/>
</dbReference>
<dbReference type="SMR" id="B3DRT4"/>
<dbReference type="GeneID" id="69578354"/>
<dbReference type="KEGG" id="blj:BLD_0407"/>
<dbReference type="HOGENOM" id="CLU_073981_2_0_11"/>
<dbReference type="Proteomes" id="UP000002419">
    <property type="component" value="Chromosome"/>
</dbReference>
<dbReference type="GO" id="GO:0005737">
    <property type="term" value="C:cytoplasm"/>
    <property type="evidence" value="ECO:0007669"/>
    <property type="project" value="UniProtKB-SubCell"/>
</dbReference>
<dbReference type="GO" id="GO:0043023">
    <property type="term" value="F:ribosomal large subunit binding"/>
    <property type="evidence" value="ECO:0007669"/>
    <property type="project" value="TreeGrafter"/>
</dbReference>
<dbReference type="GO" id="GO:0006415">
    <property type="term" value="P:translational termination"/>
    <property type="evidence" value="ECO:0007669"/>
    <property type="project" value="UniProtKB-UniRule"/>
</dbReference>
<dbReference type="CDD" id="cd00520">
    <property type="entry name" value="RRF"/>
    <property type="match status" value="1"/>
</dbReference>
<dbReference type="FunFam" id="1.10.132.20:FF:000001">
    <property type="entry name" value="Ribosome-recycling factor"/>
    <property type="match status" value="1"/>
</dbReference>
<dbReference type="FunFam" id="3.30.1360.40:FF:000001">
    <property type="entry name" value="Ribosome-recycling factor"/>
    <property type="match status" value="1"/>
</dbReference>
<dbReference type="Gene3D" id="3.30.1360.40">
    <property type="match status" value="1"/>
</dbReference>
<dbReference type="Gene3D" id="1.10.132.20">
    <property type="entry name" value="Ribosome-recycling factor"/>
    <property type="match status" value="1"/>
</dbReference>
<dbReference type="HAMAP" id="MF_00040">
    <property type="entry name" value="RRF"/>
    <property type="match status" value="1"/>
</dbReference>
<dbReference type="InterPro" id="IPR002661">
    <property type="entry name" value="Ribosome_recyc_fac"/>
</dbReference>
<dbReference type="InterPro" id="IPR023584">
    <property type="entry name" value="Ribosome_recyc_fac_dom"/>
</dbReference>
<dbReference type="InterPro" id="IPR036191">
    <property type="entry name" value="RRF_sf"/>
</dbReference>
<dbReference type="NCBIfam" id="TIGR00496">
    <property type="entry name" value="frr"/>
    <property type="match status" value="1"/>
</dbReference>
<dbReference type="PANTHER" id="PTHR20982:SF3">
    <property type="entry name" value="MITOCHONDRIAL RIBOSOME RECYCLING FACTOR PSEUDO 1"/>
    <property type="match status" value="1"/>
</dbReference>
<dbReference type="PANTHER" id="PTHR20982">
    <property type="entry name" value="RIBOSOME RECYCLING FACTOR"/>
    <property type="match status" value="1"/>
</dbReference>
<dbReference type="Pfam" id="PF01765">
    <property type="entry name" value="RRF"/>
    <property type="match status" value="1"/>
</dbReference>
<dbReference type="SUPFAM" id="SSF55194">
    <property type="entry name" value="Ribosome recycling factor, RRF"/>
    <property type="match status" value="1"/>
</dbReference>
<evidence type="ECO:0000255" key="1">
    <source>
        <dbReference type="HAMAP-Rule" id="MF_00040"/>
    </source>
</evidence>
<protein>
    <recommendedName>
        <fullName evidence="1">Ribosome-recycling factor</fullName>
        <shortName evidence="1">RRF</shortName>
    </recommendedName>
    <alternativeName>
        <fullName evidence="1">Ribosome-releasing factor</fullName>
    </alternativeName>
</protein>
<gene>
    <name evidence="1" type="primary">frr</name>
    <name type="ordered locus">BLD_0407</name>
</gene>
<feature type="chain" id="PRO_1000090709" description="Ribosome-recycling factor">
    <location>
        <begin position="1"/>
        <end position="183"/>
    </location>
</feature>
<name>RRF_BIFLD</name>